<reference key="1">
    <citation type="journal article" date="2006" name="Genome Res.">
        <title>Skewed genomic variability in strains of the toxigenic bacterial pathogen, Clostridium perfringens.</title>
        <authorList>
            <person name="Myers G.S.A."/>
            <person name="Rasko D.A."/>
            <person name="Cheung J.K."/>
            <person name="Ravel J."/>
            <person name="Seshadri R."/>
            <person name="DeBoy R.T."/>
            <person name="Ren Q."/>
            <person name="Varga J."/>
            <person name="Awad M.M."/>
            <person name="Brinkac L.M."/>
            <person name="Daugherty S.C."/>
            <person name="Haft D.H."/>
            <person name="Dodson R.J."/>
            <person name="Madupu R."/>
            <person name="Nelson W.C."/>
            <person name="Rosovitz M.J."/>
            <person name="Sullivan S.A."/>
            <person name="Khouri H."/>
            <person name="Dimitrov G.I."/>
            <person name="Watkins K.L."/>
            <person name="Mulligan S."/>
            <person name="Benton J."/>
            <person name="Radune D."/>
            <person name="Fisher D.J."/>
            <person name="Atkins H.S."/>
            <person name="Hiscox T."/>
            <person name="Jost B.H."/>
            <person name="Billington S.J."/>
            <person name="Songer J.G."/>
            <person name="McClane B.A."/>
            <person name="Titball R.W."/>
            <person name="Rood J.I."/>
            <person name="Melville S.B."/>
            <person name="Paulsen I.T."/>
        </authorList>
    </citation>
    <scope>NUCLEOTIDE SEQUENCE [LARGE SCALE GENOMIC DNA]</scope>
    <source>
        <strain>SM101 / Type A</strain>
    </source>
</reference>
<accession>Q0SWJ6</accession>
<keyword id="KW-0071">Autoinducer synthesis</keyword>
<keyword id="KW-0408">Iron</keyword>
<keyword id="KW-0456">Lyase</keyword>
<keyword id="KW-0479">Metal-binding</keyword>
<keyword id="KW-0673">Quorum sensing</keyword>
<name>LUXS_CLOPS</name>
<evidence type="ECO:0000255" key="1">
    <source>
        <dbReference type="HAMAP-Rule" id="MF_00091"/>
    </source>
</evidence>
<gene>
    <name evidence="1" type="primary">luxS</name>
    <name type="ordered locus">CPR_0167</name>
</gene>
<sequence>MVKVESFELDHTKVKAPYVRKAGIKIGPKGDIVSKFDLRFVQPNKELLSDKGMHTLEHFLAGFMREKLDDVIDISPMGCKTGFYLTSFGDIDVKDIIEALEYSLSKVLEQEEIPAANELQCGSAKLHSLELAKSHAKQVLENGISDKFYVE</sequence>
<proteinExistence type="inferred from homology"/>
<organism>
    <name type="scientific">Clostridium perfringens (strain SM101 / Type A)</name>
    <dbReference type="NCBI Taxonomy" id="289380"/>
    <lineage>
        <taxon>Bacteria</taxon>
        <taxon>Bacillati</taxon>
        <taxon>Bacillota</taxon>
        <taxon>Clostridia</taxon>
        <taxon>Eubacteriales</taxon>
        <taxon>Clostridiaceae</taxon>
        <taxon>Clostridium</taxon>
    </lineage>
</organism>
<feature type="chain" id="PRO_0000297992" description="S-ribosylhomocysteine lyase">
    <location>
        <begin position="1"/>
        <end position="151"/>
    </location>
</feature>
<feature type="binding site" evidence="1">
    <location>
        <position position="54"/>
    </location>
    <ligand>
        <name>Fe cation</name>
        <dbReference type="ChEBI" id="CHEBI:24875"/>
    </ligand>
</feature>
<feature type="binding site" evidence="1">
    <location>
        <position position="58"/>
    </location>
    <ligand>
        <name>Fe cation</name>
        <dbReference type="ChEBI" id="CHEBI:24875"/>
    </ligand>
</feature>
<feature type="binding site" evidence="1">
    <location>
        <position position="121"/>
    </location>
    <ligand>
        <name>Fe cation</name>
        <dbReference type="ChEBI" id="CHEBI:24875"/>
    </ligand>
</feature>
<dbReference type="EC" id="4.4.1.21" evidence="1"/>
<dbReference type="EMBL" id="CP000312">
    <property type="protein sequence ID" value="ABG87307.1"/>
    <property type="molecule type" value="Genomic_DNA"/>
</dbReference>
<dbReference type="RefSeq" id="WP_003452649.1">
    <property type="nucleotide sequence ID" value="NZ_CAXVKH010000060.1"/>
</dbReference>
<dbReference type="SMR" id="Q0SWJ6"/>
<dbReference type="KEGG" id="cpr:CPR_0167"/>
<dbReference type="BRENDA" id="4.4.1.21">
    <property type="organism ID" value="1503"/>
</dbReference>
<dbReference type="Proteomes" id="UP000001824">
    <property type="component" value="Chromosome"/>
</dbReference>
<dbReference type="GO" id="GO:0005506">
    <property type="term" value="F:iron ion binding"/>
    <property type="evidence" value="ECO:0007669"/>
    <property type="project" value="InterPro"/>
</dbReference>
<dbReference type="GO" id="GO:0043768">
    <property type="term" value="F:S-ribosylhomocysteine lyase activity"/>
    <property type="evidence" value="ECO:0007669"/>
    <property type="project" value="UniProtKB-UniRule"/>
</dbReference>
<dbReference type="GO" id="GO:0009372">
    <property type="term" value="P:quorum sensing"/>
    <property type="evidence" value="ECO:0007669"/>
    <property type="project" value="UniProtKB-UniRule"/>
</dbReference>
<dbReference type="Gene3D" id="3.30.1360.80">
    <property type="entry name" value="S-ribosylhomocysteinase (LuxS)"/>
    <property type="match status" value="1"/>
</dbReference>
<dbReference type="HAMAP" id="MF_00091">
    <property type="entry name" value="LuxS"/>
    <property type="match status" value="1"/>
</dbReference>
<dbReference type="InterPro" id="IPR037005">
    <property type="entry name" value="LuxS_sf"/>
</dbReference>
<dbReference type="InterPro" id="IPR011249">
    <property type="entry name" value="Metalloenz_LuxS/M16"/>
</dbReference>
<dbReference type="InterPro" id="IPR003815">
    <property type="entry name" value="S-ribosylhomocysteinase"/>
</dbReference>
<dbReference type="NCBIfam" id="NF002604">
    <property type="entry name" value="PRK02260.1-4"/>
    <property type="match status" value="1"/>
</dbReference>
<dbReference type="NCBIfam" id="NF002606">
    <property type="entry name" value="PRK02260.2-4"/>
    <property type="match status" value="1"/>
</dbReference>
<dbReference type="PANTHER" id="PTHR35799">
    <property type="entry name" value="S-RIBOSYLHOMOCYSTEINE LYASE"/>
    <property type="match status" value="1"/>
</dbReference>
<dbReference type="PANTHER" id="PTHR35799:SF1">
    <property type="entry name" value="S-RIBOSYLHOMOCYSTEINE LYASE"/>
    <property type="match status" value="1"/>
</dbReference>
<dbReference type="Pfam" id="PF02664">
    <property type="entry name" value="LuxS"/>
    <property type="match status" value="1"/>
</dbReference>
<dbReference type="PIRSF" id="PIRSF006160">
    <property type="entry name" value="AI2"/>
    <property type="match status" value="1"/>
</dbReference>
<dbReference type="PRINTS" id="PR01487">
    <property type="entry name" value="LUXSPROTEIN"/>
</dbReference>
<dbReference type="SUPFAM" id="SSF63411">
    <property type="entry name" value="LuxS/MPP-like metallohydrolase"/>
    <property type="match status" value="1"/>
</dbReference>
<comment type="function">
    <text evidence="1">Involved in the synthesis of autoinducer 2 (AI-2) which is secreted by bacteria and is used to communicate both the cell density and the metabolic potential of the environment. The regulation of gene expression in response to changes in cell density is called quorum sensing. Catalyzes the transformation of S-ribosylhomocysteine (RHC) to homocysteine (HC) and 4,5-dihydroxy-2,3-pentadione (DPD).</text>
</comment>
<comment type="catalytic activity">
    <reaction evidence="1">
        <text>S-(5-deoxy-D-ribos-5-yl)-L-homocysteine = (S)-4,5-dihydroxypentane-2,3-dione + L-homocysteine</text>
        <dbReference type="Rhea" id="RHEA:17753"/>
        <dbReference type="ChEBI" id="CHEBI:29484"/>
        <dbReference type="ChEBI" id="CHEBI:58195"/>
        <dbReference type="ChEBI" id="CHEBI:58199"/>
        <dbReference type="EC" id="4.4.1.21"/>
    </reaction>
</comment>
<comment type="cofactor">
    <cofactor evidence="1">
        <name>Fe cation</name>
        <dbReference type="ChEBI" id="CHEBI:24875"/>
    </cofactor>
    <text evidence="1">Binds 1 Fe cation per subunit.</text>
</comment>
<comment type="subunit">
    <text evidence="1">Homodimer.</text>
</comment>
<comment type="similarity">
    <text evidence="1">Belongs to the LuxS family.</text>
</comment>
<protein>
    <recommendedName>
        <fullName evidence="1">S-ribosylhomocysteine lyase</fullName>
        <ecNumber evidence="1">4.4.1.21</ecNumber>
    </recommendedName>
    <alternativeName>
        <fullName evidence="1">AI-2 synthesis protein</fullName>
    </alternativeName>
    <alternativeName>
        <fullName evidence="1">Autoinducer-2 production protein LuxS</fullName>
    </alternativeName>
</protein>